<keyword id="KW-0489">Methyltransferase</keyword>
<keyword id="KW-0949">S-adenosyl-L-methionine</keyword>
<keyword id="KW-0808">Transferase</keyword>
<sequence>MGREFIPLFEDWAATYDATVHGADKQYAAVFKGYDNILDSIVALSGSNVLEFGPGTGNLTAKLAAANKKVFGVEPSPSMRKLAADKLSDKAVFSDGDFLEFPAPPFQIDTIVSSYAFHHLTDEEKRTAVKQYGAILQKHDKIVFADTVFKDHEAYDEAIKKAIRNGYHQLADDLKTEHYPTLGTMKNIFSEEGFAARFTQQNDFVWIMEAIKR</sequence>
<evidence type="ECO:0000255" key="1">
    <source>
        <dbReference type="HAMAP-Rule" id="MF_02100"/>
    </source>
</evidence>
<protein>
    <recommendedName>
        <fullName evidence="1">Uncharacterized methyltransferase RBAM_024380</fullName>
        <ecNumber evidence="1">2.1.1.-</ecNumber>
    </recommendedName>
</protein>
<reference key="1">
    <citation type="journal article" date="2007" name="Nat. Biotechnol.">
        <title>Comparative analysis of the complete genome sequence of the plant growth-promoting bacterium Bacillus amyloliquefaciens FZB42.</title>
        <authorList>
            <person name="Chen X.H."/>
            <person name="Koumoutsi A."/>
            <person name="Scholz R."/>
            <person name="Eisenreich A."/>
            <person name="Schneider K."/>
            <person name="Heinemeyer I."/>
            <person name="Morgenstern B."/>
            <person name="Voss B."/>
            <person name="Hess W.R."/>
            <person name="Reva O."/>
            <person name="Junge H."/>
            <person name="Voigt B."/>
            <person name="Jungblut P.R."/>
            <person name="Vater J."/>
            <person name="Suessmuth R."/>
            <person name="Liesegang H."/>
            <person name="Strittmatter A."/>
            <person name="Gottschalk G."/>
            <person name="Borriss R."/>
        </authorList>
    </citation>
    <scope>NUCLEOTIDE SEQUENCE [LARGE SCALE GENOMIC DNA]</scope>
    <source>
        <strain>DSM 23117 / BGSC 10A6 / LMG 26770 / FZB42</strain>
    </source>
</reference>
<organism>
    <name type="scientific">Bacillus velezensis (strain DSM 23117 / BGSC 10A6 / LMG 26770 / FZB42)</name>
    <name type="common">Bacillus amyloliquefaciens subsp. plantarum</name>
    <dbReference type="NCBI Taxonomy" id="326423"/>
    <lineage>
        <taxon>Bacteria</taxon>
        <taxon>Bacillati</taxon>
        <taxon>Bacillota</taxon>
        <taxon>Bacilli</taxon>
        <taxon>Bacillales</taxon>
        <taxon>Bacillaceae</taxon>
        <taxon>Bacillus</taxon>
        <taxon>Bacillus amyloliquefaciens group</taxon>
    </lineage>
</organism>
<name>Y2438_BACVZ</name>
<feature type="chain" id="PRO_0000373840" description="Uncharacterized methyltransferase RBAM_024380">
    <location>
        <begin position="1"/>
        <end position="213"/>
    </location>
</feature>
<feature type="binding site" evidence="1">
    <location>
        <position position="53"/>
    </location>
    <ligand>
        <name>S-adenosyl-L-methionine</name>
        <dbReference type="ChEBI" id="CHEBI:59789"/>
    </ligand>
</feature>
<feature type="binding site" evidence="1">
    <location>
        <position position="74"/>
    </location>
    <ligand>
        <name>S-adenosyl-L-methionine</name>
        <dbReference type="ChEBI" id="CHEBI:59789"/>
    </ligand>
</feature>
<feature type="binding site" evidence="1">
    <location>
        <position position="97"/>
    </location>
    <ligand>
        <name>S-adenosyl-L-methionine</name>
        <dbReference type="ChEBI" id="CHEBI:59789"/>
    </ligand>
</feature>
<dbReference type="EC" id="2.1.1.-" evidence="1"/>
<dbReference type="EMBL" id="CP000560">
    <property type="protein sequence ID" value="ABS74798.1"/>
    <property type="molecule type" value="Genomic_DNA"/>
</dbReference>
<dbReference type="RefSeq" id="WP_012118064.1">
    <property type="nucleotide sequence ID" value="NC_009725.2"/>
</dbReference>
<dbReference type="SMR" id="A7Z722"/>
<dbReference type="GeneID" id="93081578"/>
<dbReference type="KEGG" id="bay:RBAM_024380"/>
<dbReference type="HOGENOM" id="CLU_111961_0_0_9"/>
<dbReference type="Proteomes" id="UP000001120">
    <property type="component" value="Chromosome"/>
</dbReference>
<dbReference type="GO" id="GO:0008757">
    <property type="term" value="F:S-adenosylmethionine-dependent methyltransferase activity"/>
    <property type="evidence" value="ECO:0007669"/>
    <property type="project" value="UniProtKB-UniRule"/>
</dbReference>
<dbReference type="GO" id="GO:0032259">
    <property type="term" value="P:methylation"/>
    <property type="evidence" value="ECO:0007669"/>
    <property type="project" value="UniProtKB-KW"/>
</dbReference>
<dbReference type="CDD" id="cd02440">
    <property type="entry name" value="AdoMet_MTases"/>
    <property type="match status" value="1"/>
</dbReference>
<dbReference type="Gene3D" id="3.40.50.150">
    <property type="entry name" value="Vaccinia Virus protein VP39"/>
    <property type="match status" value="1"/>
</dbReference>
<dbReference type="HAMAP" id="MF_02100">
    <property type="entry name" value="Methyltr_YrrT"/>
    <property type="match status" value="1"/>
</dbReference>
<dbReference type="InterPro" id="IPR041698">
    <property type="entry name" value="Methyltransf_25"/>
</dbReference>
<dbReference type="InterPro" id="IPR029063">
    <property type="entry name" value="SAM-dependent_MTases_sf"/>
</dbReference>
<dbReference type="InterPro" id="IPR023553">
    <property type="entry name" value="Uncharacterised_MeTfrase_YrrT"/>
</dbReference>
<dbReference type="PANTHER" id="PTHR43861:SF1">
    <property type="entry name" value="TRANS-ACONITATE 2-METHYLTRANSFERASE"/>
    <property type="match status" value="1"/>
</dbReference>
<dbReference type="PANTHER" id="PTHR43861">
    <property type="entry name" value="TRANS-ACONITATE 2-METHYLTRANSFERASE-RELATED"/>
    <property type="match status" value="1"/>
</dbReference>
<dbReference type="Pfam" id="PF13649">
    <property type="entry name" value="Methyltransf_25"/>
    <property type="match status" value="1"/>
</dbReference>
<dbReference type="SUPFAM" id="SSF53335">
    <property type="entry name" value="S-adenosyl-L-methionine-dependent methyltransferases"/>
    <property type="match status" value="1"/>
</dbReference>
<comment type="function">
    <text evidence="1">Could be a S-adenosyl-L-methionine-dependent methyltransferase.</text>
</comment>
<comment type="similarity">
    <text evidence="1">Belongs to the methyltransferase superfamily. YrrT family.</text>
</comment>
<gene>
    <name type="primary">yrrT</name>
    <name type="ordered locus">RBAM_024380</name>
</gene>
<accession>A7Z722</accession>
<proteinExistence type="inferred from homology"/>